<keyword id="KW-0408">Iron</keyword>
<keyword id="KW-0411">Iron-sulfur</keyword>
<keyword id="KW-0479">Metal-binding</keyword>
<keyword id="KW-1185">Reference proteome</keyword>
<proteinExistence type="inferred from homology"/>
<gene>
    <name evidence="1" type="primary">erpA</name>
    <name type="ordered locus">Hhal_0879</name>
</gene>
<feature type="chain" id="PRO_0000311493" description="Iron-sulfur cluster insertion protein ErpA">
    <location>
        <begin position="1"/>
        <end position="123"/>
    </location>
</feature>
<feature type="binding site" evidence="1">
    <location>
        <position position="51"/>
    </location>
    <ligand>
        <name>iron-sulfur cluster</name>
        <dbReference type="ChEBI" id="CHEBI:30408"/>
    </ligand>
</feature>
<feature type="binding site" evidence="1">
    <location>
        <position position="115"/>
    </location>
    <ligand>
        <name>iron-sulfur cluster</name>
        <dbReference type="ChEBI" id="CHEBI:30408"/>
    </ligand>
</feature>
<feature type="binding site" evidence="1">
    <location>
        <position position="117"/>
    </location>
    <ligand>
        <name>iron-sulfur cluster</name>
        <dbReference type="ChEBI" id="CHEBI:30408"/>
    </ligand>
</feature>
<protein>
    <recommendedName>
        <fullName evidence="1">Iron-sulfur cluster insertion protein ErpA</fullName>
    </recommendedName>
</protein>
<reference key="1">
    <citation type="submission" date="2006-12" db="EMBL/GenBank/DDBJ databases">
        <title>Complete sequence of Halorhodospira halophila SL1.</title>
        <authorList>
            <consortium name="US DOE Joint Genome Institute"/>
            <person name="Copeland A."/>
            <person name="Lucas S."/>
            <person name="Lapidus A."/>
            <person name="Barry K."/>
            <person name="Detter J.C."/>
            <person name="Glavina del Rio T."/>
            <person name="Hammon N."/>
            <person name="Israni S."/>
            <person name="Dalin E."/>
            <person name="Tice H."/>
            <person name="Pitluck S."/>
            <person name="Saunders E."/>
            <person name="Brettin T."/>
            <person name="Bruce D."/>
            <person name="Han C."/>
            <person name="Tapia R."/>
            <person name="Schmutz J."/>
            <person name="Larimer F."/>
            <person name="Land M."/>
            <person name="Hauser L."/>
            <person name="Kyrpides N."/>
            <person name="Mikhailova N."/>
            <person name="Hoff W."/>
            <person name="Richardson P."/>
        </authorList>
    </citation>
    <scope>NUCLEOTIDE SEQUENCE [LARGE SCALE GENOMIC DNA]</scope>
    <source>
        <strain>DSM 244 / SL1</strain>
    </source>
</reference>
<sequence length="123" mass="13069">MSDIAEPETHAPADDQLLIFTDAAADKVRELLDGEEGGDVKLRVFITGGGCSGFQYGFTFDETVEEGDTIIEKRGVKIVVDPVSGIYLQGAEVDFSSGLEGEQFIIRNPNATTTCGCGSSFAI</sequence>
<dbReference type="EMBL" id="CP000544">
    <property type="protein sequence ID" value="ABM61655.1"/>
    <property type="molecule type" value="Genomic_DNA"/>
</dbReference>
<dbReference type="RefSeq" id="WP_011813678.1">
    <property type="nucleotide sequence ID" value="NC_008789.1"/>
</dbReference>
<dbReference type="SMR" id="A1WVE3"/>
<dbReference type="STRING" id="349124.Hhal_0879"/>
<dbReference type="KEGG" id="hha:Hhal_0879"/>
<dbReference type="eggNOG" id="COG0316">
    <property type="taxonomic scope" value="Bacteria"/>
</dbReference>
<dbReference type="HOGENOM" id="CLU_069054_5_3_6"/>
<dbReference type="Proteomes" id="UP000000647">
    <property type="component" value="Chromosome"/>
</dbReference>
<dbReference type="GO" id="GO:0005829">
    <property type="term" value="C:cytosol"/>
    <property type="evidence" value="ECO:0007669"/>
    <property type="project" value="TreeGrafter"/>
</dbReference>
<dbReference type="GO" id="GO:0051537">
    <property type="term" value="F:2 iron, 2 sulfur cluster binding"/>
    <property type="evidence" value="ECO:0007669"/>
    <property type="project" value="UniProtKB-ARBA"/>
</dbReference>
<dbReference type="GO" id="GO:0051539">
    <property type="term" value="F:4 iron, 4 sulfur cluster binding"/>
    <property type="evidence" value="ECO:0007669"/>
    <property type="project" value="TreeGrafter"/>
</dbReference>
<dbReference type="GO" id="GO:0005506">
    <property type="term" value="F:iron ion binding"/>
    <property type="evidence" value="ECO:0007669"/>
    <property type="project" value="UniProtKB-UniRule"/>
</dbReference>
<dbReference type="GO" id="GO:0016226">
    <property type="term" value="P:iron-sulfur cluster assembly"/>
    <property type="evidence" value="ECO:0007669"/>
    <property type="project" value="UniProtKB-UniRule"/>
</dbReference>
<dbReference type="FunFam" id="2.60.300.12:FF:000002">
    <property type="entry name" value="Iron-sulfur cluster insertion protein ErpA"/>
    <property type="match status" value="1"/>
</dbReference>
<dbReference type="Gene3D" id="2.60.300.12">
    <property type="entry name" value="HesB-like domain"/>
    <property type="match status" value="1"/>
</dbReference>
<dbReference type="HAMAP" id="MF_01380">
    <property type="entry name" value="Fe_S_insert_ErpA"/>
    <property type="match status" value="1"/>
</dbReference>
<dbReference type="InterPro" id="IPR000361">
    <property type="entry name" value="FeS_biogenesis"/>
</dbReference>
<dbReference type="InterPro" id="IPR016092">
    <property type="entry name" value="FeS_cluster_insertion"/>
</dbReference>
<dbReference type="InterPro" id="IPR017870">
    <property type="entry name" value="FeS_cluster_insertion_CS"/>
</dbReference>
<dbReference type="InterPro" id="IPR023063">
    <property type="entry name" value="FeS_cluster_insertion_RrpA"/>
</dbReference>
<dbReference type="InterPro" id="IPR035903">
    <property type="entry name" value="HesB-like_dom_sf"/>
</dbReference>
<dbReference type="NCBIfam" id="TIGR00049">
    <property type="entry name" value="iron-sulfur cluster assembly accessory protein"/>
    <property type="match status" value="1"/>
</dbReference>
<dbReference type="NCBIfam" id="NF010147">
    <property type="entry name" value="PRK13623.1"/>
    <property type="match status" value="1"/>
</dbReference>
<dbReference type="PANTHER" id="PTHR43011">
    <property type="entry name" value="IRON-SULFUR CLUSTER ASSEMBLY 2 HOMOLOG, MITOCHONDRIAL"/>
    <property type="match status" value="1"/>
</dbReference>
<dbReference type="PANTHER" id="PTHR43011:SF1">
    <property type="entry name" value="IRON-SULFUR CLUSTER ASSEMBLY 2 HOMOLOG, MITOCHONDRIAL"/>
    <property type="match status" value="1"/>
</dbReference>
<dbReference type="Pfam" id="PF01521">
    <property type="entry name" value="Fe-S_biosyn"/>
    <property type="match status" value="1"/>
</dbReference>
<dbReference type="SUPFAM" id="SSF89360">
    <property type="entry name" value="HesB-like domain"/>
    <property type="match status" value="1"/>
</dbReference>
<dbReference type="PROSITE" id="PS01152">
    <property type="entry name" value="HESB"/>
    <property type="match status" value="1"/>
</dbReference>
<name>ERPA_HALHL</name>
<evidence type="ECO:0000255" key="1">
    <source>
        <dbReference type="HAMAP-Rule" id="MF_01380"/>
    </source>
</evidence>
<comment type="function">
    <text evidence="1">Required for insertion of 4Fe-4S clusters for at least IspG.</text>
</comment>
<comment type="cofactor">
    <cofactor evidence="1">
        <name>iron-sulfur cluster</name>
        <dbReference type="ChEBI" id="CHEBI:30408"/>
    </cofactor>
    <text evidence="1">Binds 1 iron-sulfur cluster per subunit.</text>
</comment>
<comment type="subunit">
    <text evidence="1">Homodimer.</text>
</comment>
<comment type="similarity">
    <text evidence="1">Belongs to the HesB/IscA family.</text>
</comment>
<accession>A1WVE3</accession>
<organism>
    <name type="scientific">Halorhodospira halophila (strain DSM 244 / SL1)</name>
    <name type="common">Ectothiorhodospira halophila (strain DSM 244 / SL1)</name>
    <dbReference type="NCBI Taxonomy" id="349124"/>
    <lineage>
        <taxon>Bacteria</taxon>
        <taxon>Pseudomonadati</taxon>
        <taxon>Pseudomonadota</taxon>
        <taxon>Gammaproteobacteria</taxon>
        <taxon>Chromatiales</taxon>
        <taxon>Ectothiorhodospiraceae</taxon>
        <taxon>Halorhodospira</taxon>
    </lineage>
</organism>